<keyword id="KW-0997">Cell inner membrane</keyword>
<keyword id="KW-1003">Cell membrane</keyword>
<keyword id="KW-0472">Membrane</keyword>
<keyword id="KW-1185">Reference proteome</keyword>
<keyword id="KW-0812">Transmembrane</keyword>
<keyword id="KW-1133">Transmembrane helix</keyword>
<protein>
    <recommendedName>
        <fullName>Inner membrane protein BB_0250</fullName>
    </recommendedName>
</protein>
<gene>
    <name type="ordered locus">BB_0250</name>
</gene>
<name>DEDA_BORBU</name>
<organism>
    <name type="scientific">Borreliella burgdorferi (strain ATCC 35210 / DSM 4680 / CIP 102532 / B31)</name>
    <name type="common">Borrelia burgdorferi</name>
    <dbReference type="NCBI Taxonomy" id="224326"/>
    <lineage>
        <taxon>Bacteria</taxon>
        <taxon>Pseudomonadati</taxon>
        <taxon>Spirochaetota</taxon>
        <taxon>Spirochaetia</taxon>
        <taxon>Spirochaetales</taxon>
        <taxon>Borreliaceae</taxon>
        <taxon>Borreliella</taxon>
    </lineage>
</organism>
<comment type="function">
    <text evidence="2">Required for proper cell division and envelope integrity.</text>
</comment>
<comment type="subcellular location">
    <subcellularLocation>
        <location evidence="2">Cell inner membrane</location>
        <topology evidence="2">Multi-pass membrane protein</topology>
    </subcellularLocation>
</comment>
<comment type="disruption phenotype">
    <text evidence="2 3">Depletion results in abnormal membrane phospholipid composition, defects in cell division and cell death.</text>
</comment>
<comment type="miscellaneous">
    <text evidence="5">Can restore normal growth and cell division to a E.coli double mutant lacking both yghB and yqjA.</text>
</comment>
<comment type="similarity">
    <text evidence="4">Belongs to the DedA family.</text>
</comment>
<dbReference type="EMBL" id="AE000783">
    <property type="protein sequence ID" value="AAB91496.1"/>
    <property type="molecule type" value="Genomic_DNA"/>
</dbReference>
<dbReference type="PIR" id="B70131">
    <property type="entry name" value="B70131"/>
</dbReference>
<dbReference type="RefSeq" id="NP_212384.1">
    <property type="nucleotide sequence ID" value="NC_001318.1"/>
</dbReference>
<dbReference type="RefSeq" id="WP_002657683.1">
    <property type="nucleotide sequence ID" value="NC_001318.1"/>
</dbReference>
<dbReference type="STRING" id="224326.BB_0250"/>
<dbReference type="PaxDb" id="224326-BB_0250"/>
<dbReference type="DNASU" id="1195087"/>
<dbReference type="EnsemblBacteria" id="AAB91496">
    <property type="protein sequence ID" value="AAB91496"/>
    <property type="gene ID" value="BB_0250"/>
</dbReference>
<dbReference type="KEGG" id="bbu:BB_0250"/>
<dbReference type="PATRIC" id="fig|224326.49.peg.649"/>
<dbReference type="HOGENOM" id="CLU_044208_4_1_12"/>
<dbReference type="OrthoDB" id="21108at2"/>
<dbReference type="Proteomes" id="UP000001807">
    <property type="component" value="Chromosome"/>
</dbReference>
<dbReference type="GO" id="GO:0005886">
    <property type="term" value="C:plasma membrane"/>
    <property type="evidence" value="ECO:0007669"/>
    <property type="project" value="UniProtKB-SubCell"/>
</dbReference>
<dbReference type="InterPro" id="IPR032818">
    <property type="entry name" value="DedA-like"/>
</dbReference>
<dbReference type="InterPro" id="IPR032816">
    <property type="entry name" value="VTT_dom"/>
</dbReference>
<dbReference type="PANTHER" id="PTHR30353">
    <property type="entry name" value="INNER MEMBRANE PROTEIN DEDA-RELATED"/>
    <property type="match status" value="1"/>
</dbReference>
<dbReference type="PANTHER" id="PTHR30353:SF15">
    <property type="entry name" value="INNER MEMBRANE PROTEIN YABI"/>
    <property type="match status" value="1"/>
</dbReference>
<dbReference type="Pfam" id="PF09335">
    <property type="entry name" value="VTT_dom"/>
    <property type="match status" value="1"/>
</dbReference>
<evidence type="ECO:0000255" key="1"/>
<evidence type="ECO:0000269" key="2">
    <source>
    </source>
</evidence>
<evidence type="ECO:0000269" key="3">
    <source>
    </source>
</evidence>
<evidence type="ECO:0000305" key="4"/>
<evidence type="ECO:0000305" key="5">
    <source>
    </source>
</evidence>
<reference key="1">
    <citation type="journal article" date="1997" name="Nature">
        <title>Genomic sequence of a Lyme disease spirochaete, Borrelia burgdorferi.</title>
        <authorList>
            <person name="Fraser C.M."/>
            <person name="Casjens S."/>
            <person name="Huang W.M."/>
            <person name="Sutton G.G."/>
            <person name="Clayton R.A."/>
            <person name="Lathigra R."/>
            <person name="White O."/>
            <person name="Ketchum K.A."/>
            <person name="Dodson R.J."/>
            <person name="Hickey E.K."/>
            <person name="Gwinn M.L."/>
            <person name="Dougherty B.A."/>
            <person name="Tomb J.-F."/>
            <person name="Fleischmann R.D."/>
            <person name="Richardson D.L."/>
            <person name="Peterson J.D."/>
            <person name="Kerlavage A.R."/>
            <person name="Quackenbush J."/>
            <person name="Salzberg S.L."/>
            <person name="Hanson M."/>
            <person name="van Vugt R."/>
            <person name="Palmer N."/>
            <person name="Adams M.D."/>
            <person name="Gocayne J.D."/>
            <person name="Weidman J.F."/>
            <person name="Utterback T.R."/>
            <person name="Watthey L."/>
            <person name="McDonald L.A."/>
            <person name="Artiach P."/>
            <person name="Bowman C."/>
            <person name="Garland S.A."/>
            <person name="Fujii C."/>
            <person name="Cotton M.D."/>
            <person name="Horst K."/>
            <person name="Roberts K.M."/>
            <person name="Hatch B."/>
            <person name="Smith H.O."/>
            <person name="Venter J.C."/>
        </authorList>
    </citation>
    <scope>NUCLEOTIDE SEQUENCE [LARGE SCALE GENOMIC DNA]</scope>
    <source>
        <strain>ATCC 35210 / DSM 4680 / CIP 102532 / B31</strain>
    </source>
</reference>
<reference key="2">
    <citation type="journal article" date="2010" name="J. Bacteriol.">
        <title>BB0250 of Borrelia burgdorferi is a conserved and essential inner membrane protein required for cell division.</title>
        <authorList>
            <person name="Liang F.T."/>
            <person name="Xu Q."/>
            <person name="Sikdar R."/>
            <person name="Xiao Y."/>
            <person name="Cox J.S."/>
            <person name="Doerrler W.T."/>
        </authorList>
    </citation>
    <scope>FUNCTION</scope>
    <scope>SUBCELLULAR LOCATION</scope>
    <scope>DISRUPTION PHENOTYPE</scope>
    <source>
        <strain>ATCC 35210 / DSM 4680 / CIP 102532 / B31</strain>
    </source>
</reference>
<reference key="3">
    <citation type="journal article" date="2014" name="Antimicrob. Agents Chemother.">
        <title>Members of the conserved DedA family are likely membrane transporters and are required for drug resistance in Escherichia coli.</title>
        <authorList>
            <person name="Kumar S."/>
            <person name="Doerrler W.T."/>
        </authorList>
    </citation>
    <scope>DISRUPTION PHENOTYPE</scope>
    <scope>MUTAGENESIS OF GLU-39 AND ASP-40</scope>
</reference>
<sequence length="204" mass="23142">MTKMYINTIIEYIDSNIAYSPIVFFSLLILAGLNVPISEDAIVLMGGILSSRKNEYTILIFLGIFWGAYLGDIISFYIGKLMGNKLFKNKKDNNLLDKINYYYGQYGVLTLFIGRFIPFGVRNAIFMSAGMGNMKSNLFIVSDFFATLLSIVVYFTLSFKLGQSFEIIFSKIKIIIFAIFIAVIATTIIIYVIKKNKKVDKNLK</sequence>
<proteinExistence type="evidence at protein level"/>
<feature type="chain" id="PRO_0000429152" description="Inner membrane protein BB_0250">
    <location>
        <begin position="1"/>
        <end position="204"/>
    </location>
</feature>
<feature type="transmembrane region" description="Helical" evidence="1">
    <location>
        <begin position="17"/>
        <end position="37"/>
    </location>
</feature>
<feature type="transmembrane region" description="Helical" evidence="1">
    <location>
        <begin position="58"/>
        <end position="78"/>
    </location>
</feature>
<feature type="transmembrane region" description="Helical" evidence="1">
    <location>
        <begin position="101"/>
        <end position="121"/>
    </location>
</feature>
<feature type="transmembrane region" description="Helical" evidence="1">
    <location>
        <begin position="139"/>
        <end position="159"/>
    </location>
</feature>
<feature type="transmembrane region" description="Helical" evidence="1">
    <location>
        <begin position="172"/>
        <end position="192"/>
    </location>
</feature>
<feature type="mutagenesis site" description="Unable to restore normal growth and cell division to the E.coli yghB-yqjA double mutant." evidence="3">
    <original>E</original>
    <variation>A</variation>
    <location>
        <position position="39"/>
    </location>
</feature>
<feature type="mutagenesis site" description="Unable to restore normal growth and cell division to the E.coli yghB-yqjA double mutant." evidence="3">
    <original>D</original>
    <variation>A</variation>
    <location>
        <position position="40"/>
    </location>
</feature>
<accession>O51266</accession>